<organism>
    <name type="scientific">Mycoplasma mycoides subsp. mycoides SC (strain CCUG 32753 / NCTC 10114 / PG1)</name>
    <dbReference type="NCBI Taxonomy" id="272632"/>
    <lineage>
        <taxon>Bacteria</taxon>
        <taxon>Bacillati</taxon>
        <taxon>Mycoplasmatota</taxon>
        <taxon>Mollicutes</taxon>
        <taxon>Mycoplasmataceae</taxon>
        <taxon>Mycoplasma</taxon>
    </lineage>
</organism>
<gene>
    <name evidence="1" type="primary">rsmH</name>
    <name type="synonym">mraW</name>
    <name type="ordered locus">MSC_0591</name>
</gene>
<name>RSMH_MYCMS</name>
<sequence length="308" mass="35023">MDKHIPVLLKESIEYLNIKPDGIYVDCTLGRAGHSSEILKKLNQKGFLYAIDQDQIAIDQAKEKLEQINNNFLLIQGNFSNLSALLAINHVFNVDGILYDLGVSSPQIDIASRGFSYKMDGPLDMRMDLNSTLTAHQVINTYSESQISEILFKYGEESFSKSISKKIVESRPINSTLELVEIIKSALPQKVLKQKKHPAKKTFQALRIYINNELIALENSLKQALDLLNSKARICVITFHSLEEKIVKNIFNNSTNYYQEQLLSNLPIKADLNSKFKLVIKKPIKPSLLELEQNHRSHSAKLWVIEKN</sequence>
<dbReference type="EC" id="2.1.1.199" evidence="1"/>
<dbReference type="EMBL" id="BX293980">
    <property type="protein sequence ID" value="CAE77214.1"/>
    <property type="molecule type" value="Genomic_DNA"/>
</dbReference>
<dbReference type="RefSeq" id="NP_975572.1">
    <property type="nucleotide sequence ID" value="NC_005364.2"/>
</dbReference>
<dbReference type="RefSeq" id="WP_011166769.1">
    <property type="nucleotide sequence ID" value="NC_005364.2"/>
</dbReference>
<dbReference type="SMR" id="P62473"/>
<dbReference type="STRING" id="272632.MSC_0591"/>
<dbReference type="KEGG" id="mmy:MSC_0591"/>
<dbReference type="PATRIC" id="fig|272632.4.peg.636"/>
<dbReference type="eggNOG" id="COG0275">
    <property type="taxonomic scope" value="Bacteria"/>
</dbReference>
<dbReference type="HOGENOM" id="CLU_038422_2_0_14"/>
<dbReference type="Proteomes" id="UP000001016">
    <property type="component" value="Chromosome"/>
</dbReference>
<dbReference type="GO" id="GO:0005737">
    <property type="term" value="C:cytoplasm"/>
    <property type="evidence" value="ECO:0007669"/>
    <property type="project" value="UniProtKB-SubCell"/>
</dbReference>
<dbReference type="GO" id="GO:0071424">
    <property type="term" value="F:rRNA (cytosine-N4-)-methyltransferase activity"/>
    <property type="evidence" value="ECO:0007669"/>
    <property type="project" value="UniProtKB-UniRule"/>
</dbReference>
<dbReference type="GO" id="GO:0070475">
    <property type="term" value="P:rRNA base methylation"/>
    <property type="evidence" value="ECO:0007669"/>
    <property type="project" value="UniProtKB-UniRule"/>
</dbReference>
<dbReference type="Gene3D" id="1.10.150.170">
    <property type="entry name" value="Putative methyltransferase TM0872, insert domain"/>
    <property type="match status" value="1"/>
</dbReference>
<dbReference type="Gene3D" id="3.40.50.150">
    <property type="entry name" value="Vaccinia Virus protein VP39"/>
    <property type="match status" value="1"/>
</dbReference>
<dbReference type="HAMAP" id="MF_01007">
    <property type="entry name" value="16SrRNA_methyltr_H"/>
    <property type="match status" value="1"/>
</dbReference>
<dbReference type="InterPro" id="IPR002903">
    <property type="entry name" value="RsmH"/>
</dbReference>
<dbReference type="InterPro" id="IPR023397">
    <property type="entry name" value="SAM-dep_MeTrfase_MraW_recog"/>
</dbReference>
<dbReference type="InterPro" id="IPR029063">
    <property type="entry name" value="SAM-dependent_MTases_sf"/>
</dbReference>
<dbReference type="NCBIfam" id="TIGR00006">
    <property type="entry name" value="16S rRNA (cytosine(1402)-N(4))-methyltransferase RsmH"/>
    <property type="match status" value="1"/>
</dbReference>
<dbReference type="PANTHER" id="PTHR11265:SF0">
    <property type="entry name" value="12S RRNA N4-METHYLCYTIDINE METHYLTRANSFERASE"/>
    <property type="match status" value="1"/>
</dbReference>
<dbReference type="PANTHER" id="PTHR11265">
    <property type="entry name" value="S-ADENOSYL-METHYLTRANSFERASE MRAW"/>
    <property type="match status" value="1"/>
</dbReference>
<dbReference type="Pfam" id="PF01795">
    <property type="entry name" value="Methyltransf_5"/>
    <property type="match status" value="1"/>
</dbReference>
<dbReference type="PIRSF" id="PIRSF004486">
    <property type="entry name" value="MraW"/>
    <property type="match status" value="1"/>
</dbReference>
<dbReference type="SUPFAM" id="SSF81799">
    <property type="entry name" value="Putative methyltransferase TM0872, insert domain"/>
    <property type="match status" value="1"/>
</dbReference>
<dbReference type="SUPFAM" id="SSF53335">
    <property type="entry name" value="S-adenosyl-L-methionine-dependent methyltransferases"/>
    <property type="match status" value="1"/>
</dbReference>
<accession>P62473</accession>
<feature type="chain" id="PRO_0000108662" description="Ribosomal RNA small subunit methyltransferase H">
    <location>
        <begin position="1"/>
        <end position="308"/>
    </location>
</feature>
<feature type="binding site" evidence="1">
    <location>
        <begin position="32"/>
        <end position="34"/>
    </location>
    <ligand>
        <name>S-adenosyl-L-methionine</name>
        <dbReference type="ChEBI" id="CHEBI:59789"/>
    </ligand>
</feature>
<feature type="binding site" evidence="1">
    <location>
        <position position="52"/>
    </location>
    <ligand>
        <name>S-adenosyl-L-methionine</name>
        <dbReference type="ChEBI" id="CHEBI:59789"/>
    </ligand>
</feature>
<feature type="binding site" evidence="1">
    <location>
        <position position="79"/>
    </location>
    <ligand>
        <name>S-adenosyl-L-methionine</name>
        <dbReference type="ChEBI" id="CHEBI:59789"/>
    </ligand>
</feature>
<feature type="binding site" evidence="1">
    <location>
        <position position="100"/>
    </location>
    <ligand>
        <name>S-adenosyl-L-methionine</name>
        <dbReference type="ChEBI" id="CHEBI:59789"/>
    </ligand>
</feature>
<feature type="binding site" evidence="1">
    <location>
        <position position="107"/>
    </location>
    <ligand>
        <name>S-adenosyl-L-methionine</name>
        <dbReference type="ChEBI" id="CHEBI:59789"/>
    </ligand>
</feature>
<keyword id="KW-0963">Cytoplasm</keyword>
<keyword id="KW-0489">Methyltransferase</keyword>
<keyword id="KW-1185">Reference proteome</keyword>
<keyword id="KW-0698">rRNA processing</keyword>
<keyword id="KW-0949">S-adenosyl-L-methionine</keyword>
<keyword id="KW-0808">Transferase</keyword>
<proteinExistence type="inferred from homology"/>
<protein>
    <recommendedName>
        <fullName evidence="1">Ribosomal RNA small subunit methyltransferase H</fullName>
        <ecNumber evidence="1">2.1.1.199</ecNumber>
    </recommendedName>
    <alternativeName>
        <fullName evidence="1">16S rRNA m(4)C1402 methyltransferase</fullName>
    </alternativeName>
    <alternativeName>
        <fullName evidence="1">rRNA (cytosine-N(4)-)-methyltransferase RsmH</fullName>
    </alternativeName>
</protein>
<comment type="function">
    <text evidence="1">Specifically methylates the N4 position of cytidine in position 1402 (C1402) of 16S rRNA.</text>
</comment>
<comment type="catalytic activity">
    <reaction evidence="1">
        <text>cytidine(1402) in 16S rRNA + S-adenosyl-L-methionine = N(4)-methylcytidine(1402) in 16S rRNA + S-adenosyl-L-homocysteine + H(+)</text>
        <dbReference type="Rhea" id="RHEA:42928"/>
        <dbReference type="Rhea" id="RHEA-COMP:10286"/>
        <dbReference type="Rhea" id="RHEA-COMP:10287"/>
        <dbReference type="ChEBI" id="CHEBI:15378"/>
        <dbReference type="ChEBI" id="CHEBI:57856"/>
        <dbReference type="ChEBI" id="CHEBI:59789"/>
        <dbReference type="ChEBI" id="CHEBI:74506"/>
        <dbReference type="ChEBI" id="CHEBI:82748"/>
        <dbReference type="EC" id="2.1.1.199"/>
    </reaction>
</comment>
<comment type="subcellular location">
    <subcellularLocation>
        <location evidence="1">Cytoplasm</location>
    </subcellularLocation>
</comment>
<comment type="similarity">
    <text evidence="1">Belongs to the methyltransferase superfamily. RsmH family.</text>
</comment>
<reference key="1">
    <citation type="journal article" date="2004" name="Genome Res.">
        <title>The genome sequence of Mycoplasma mycoides subsp. mycoides SC type strain PG1T, the causative agent of contagious bovine pleuropneumonia (CBPP).</title>
        <authorList>
            <person name="Westberg J."/>
            <person name="Persson A."/>
            <person name="Holmberg A."/>
            <person name="Goesmann A."/>
            <person name="Lundeberg J."/>
            <person name="Johansson K.-E."/>
            <person name="Pettersson B."/>
            <person name="Uhlen M."/>
        </authorList>
    </citation>
    <scope>NUCLEOTIDE SEQUENCE [LARGE SCALE GENOMIC DNA]</scope>
    <source>
        <strain>CCUG 32753 / NCTC 10114 / PG1</strain>
    </source>
</reference>
<evidence type="ECO:0000255" key="1">
    <source>
        <dbReference type="HAMAP-Rule" id="MF_01007"/>
    </source>
</evidence>